<proteinExistence type="evidence at transcript level"/>
<feature type="chain" id="PRO_0000319426" description="Transmembrane protein 220">
    <location>
        <begin position="1"/>
        <end position="184"/>
    </location>
</feature>
<feature type="transmembrane region" description="Helical" evidence="1">
    <location>
        <begin position="30"/>
        <end position="50"/>
    </location>
</feature>
<feature type="transmembrane region" description="Helical" evidence="1">
    <location>
        <begin position="54"/>
        <end position="74"/>
    </location>
</feature>
<feature type="transmembrane region" description="Helical" evidence="1">
    <location>
        <begin position="82"/>
        <end position="102"/>
    </location>
</feature>
<feature type="transmembrane region" description="Helical" evidence="1">
    <location>
        <begin position="121"/>
        <end position="137"/>
    </location>
</feature>
<feature type="transmembrane region" description="Helical" evidence="1">
    <location>
        <begin position="149"/>
        <end position="169"/>
    </location>
</feature>
<sequence length="184" mass="20906">MEGSGTEQKGSPKCSFLTNSLLCHENRQRLWRICNFIMFGFFSLAAYVQINDPDAEMWIVIYMIPAVLILFVSIKPDITGHVIWKLLADLHSAVCAVGAIYLSGCLYFYTSKNILHEEEGRELSGLLIISGWLLLCRKSHQSAIGAIRLIIAISVSTAPFFIWIYIYIDKEMRTSWPQHCKTVI</sequence>
<protein>
    <recommendedName>
        <fullName>Transmembrane protein 220</fullName>
    </recommendedName>
</protein>
<accession>Q4V7Q8</accession>
<evidence type="ECO:0000255" key="1"/>
<evidence type="ECO:0000305" key="2"/>
<gene>
    <name type="primary">tmem220</name>
</gene>
<reference key="1">
    <citation type="submission" date="2005-06" db="EMBL/GenBank/DDBJ databases">
        <authorList>
            <consortium name="NIH - Xenopus Gene Collection (XGC) project"/>
        </authorList>
    </citation>
    <scope>NUCLEOTIDE SEQUENCE [LARGE SCALE MRNA]</scope>
    <source>
        <tissue>Egg</tissue>
    </source>
</reference>
<name>TM220_XENLA</name>
<dbReference type="EMBL" id="BC097768">
    <property type="protein sequence ID" value="AAH97768.1"/>
    <property type="molecule type" value="mRNA"/>
</dbReference>
<dbReference type="RefSeq" id="NP_001090046.1">
    <property type="nucleotide sequence ID" value="NM_001096577.1"/>
</dbReference>
<dbReference type="RefSeq" id="XP_018090112.1">
    <property type="nucleotide sequence ID" value="XM_018234623.1"/>
</dbReference>
<dbReference type="DNASU" id="735119"/>
<dbReference type="GeneID" id="735119"/>
<dbReference type="KEGG" id="xla:735119"/>
<dbReference type="AGR" id="Xenbase:XB-GENE-6254287"/>
<dbReference type="CTD" id="735119"/>
<dbReference type="Xenbase" id="XB-GENE-6254287">
    <property type="gene designation" value="tmem220.L"/>
</dbReference>
<dbReference type="OMA" id="WAPALWR"/>
<dbReference type="OrthoDB" id="9924288at2759"/>
<dbReference type="Proteomes" id="UP000186698">
    <property type="component" value="Chromosome 9_10L"/>
</dbReference>
<dbReference type="Bgee" id="735119">
    <property type="expression patterns" value="Expressed in egg cell and 19 other cell types or tissues"/>
</dbReference>
<dbReference type="GO" id="GO:0016020">
    <property type="term" value="C:membrane"/>
    <property type="evidence" value="ECO:0007669"/>
    <property type="project" value="UniProtKB-SubCell"/>
</dbReference>
<dbReference type="InterPro" id="IPR029377">
    <property type="entry name" value="TMEM220"/>
</dbReference>
<dbReference type="PANTHER" id="PTHR34262">
    <property type="entry name" value="TRANSMEMBRANE PROTEIN 220"/>
    <property type="match status" value="1"/>
</dbReference>
<dbReference type="PANTHER" id="PTHR34262:SF1">
    <property type="entry name" value="TRANSMEMBRANE PROTEIN 220"/>
    <property type="match status" value="1"/>
</dbReference>
<dbReference type="Pfam" id="PF15071">
    <property type="entry name" value="TMEM220"/>
    <property type="match status" value="1"/>
</dbReference>
<keyword id="KW-0472">Membrane</keyword>
<keyword id="KW-1185">Reference proteome</keyword>
<keyword id="KW-0812">Transmembrane</keyword>
<keyword id="KW-1133">Transmembrane helix</keyword>
<organism>
    <name type="scientific">Xenopus laevis</name>
    <name type="common">African clawed frog</name>
    <dbReference type="NCBI Taxonomy" id="8355"/>
    <lineage>
        <taxon>Eukaryota</taxon>
        <taxon>Metazoa</taxon>
        <taxon>Chordata</taxon>
        <taxon>Craniata</taxon>
        <taxon>Vertebrata</taxon>
        <taxon>Euteleostomi</taxon>
        <taxon>Amphibia</taxon>
        <taxon>Batrachia</taxon>
        <taxon>Anura</taxon>
        <taxon>Pipoidea</taxon>
        <taxon>Pipidae</taxon>
        <taxon>Xenopodinae</taxon>
        <taxon>Xenopus</taxon>
        <taxon>Xenopus</taxon>
    </lineage>
</organism>
<comment type="subcellular location">
    <subcellularLocation>
        <location evidence="2">Membrane</location>
        <topology evidence="2">Multi-pass membrane protein</topology>
    </subcellularLocation>
</comment>